<gene>
    <name evidence="1" type="primary">lipB</name>
    <name type="ordered locus">Synpcc7942_2353</name>
</gene>
<protein>
    <recommendedName>
        <fullName evidence="1">Octanoyltransferase</fullName>
        <ecNumber evidence="1">2.3.1.181</ecNumber>
    </recommendedName>
    <alternativeName>
        <fullName evidence="1">Lipoate-protein ligase B</fullName>
    </alternativeName>
    <alternativeName>
        <fullName evidence="1">Lipoyl/octanoyl transferase</fullName>
    </alternativeName>
    <alternativeName>
        <fullName evidence="1">Octanoyl-[acyl-carrier-protein]-protein N-octanoyltransferase</fullName>
    </alternativeName>
</protein>
<comment type="function">
    <text evidence="1">Catalyzes the transfer of endogenously produced octanoic acid from octanoyl-acyl-carrier-protein onto the lipoyl domains of lipoate-dependent enzymes. Lipoyl-ACP can also act as a substrate although octanoyl-ACP is likely to be the physiological substrate.</text>
</comment>
<comment type="catalytic activity">
    <reaction evidence="1">
        <text>octanoyl-[ACP] + L-lysyl-[protein] = N(6)-octanoyl-L-lysyl-[protein] + holo-[ACP] + H(+)</text>
        <dbReference type="Rhea" id="RHEA:17665"/>
        <dbReference type="Rhea" id="RHEA-COMP:9636"/>
        <dbReference type="Rhea" id="RHEA-COMP:9685"/>
        <dbReference type="Rhea" id="RHEA-COMP:9752"/>
        <dbReference type="Rhea" id="RHEA-COMP:9928"/>
        <dbReference type="ChEBI" id="CHEBI:15378"/>
        <dbReference type="ChEBI" id="CHEBI:29969"/>
        <dbReference type="ChEBI" id="CHEBI:64479"/>
        <dbReference type="ChEBI" id="CHEBI:78463"/>
        <dbReference type="ChEBI" id="CHEBI:78809"/>
        <dbReference type="EC" id="2.3.1.181"/>
    </reaction>
</comment>
<comment type="pathway">
    <text evidence="1">Protein modification; protein lipoylation via endogenous pathway; protein N(6)-(lipoyl)lysine from octanoyl-[acyl-carrier-protein]: step 1/2.</text>
</comment>
<comment type="subcellular location">
    <subcellularLocation>
        <location evidence="1">Cytoplasm</location>
    </subcellularLocation>
</comment>
<comment type="miscellaneous">
    <text evidence="1">In the reaction, the free carboxyl group of octanoic acid is attached via an amide linkage to the epsilon-amino group of a specific lysine residue of lipoyl domains of lipoate-dependent enzymes.</text>
</comment>
<comment type="similarity">
    <text evidence="1">Belongs to the LipB family.</text>
</comment>
<evidence type="ECO:0000255" key="1">
    <source>
        <dbReference type="HAMAP-Rule" id="MF_00013"/>
    </source>
</evidence>
<evidence type="ECO:0000255" key="2">
    <source>
        <dbReference type="PROSITE-ProRule" id="PRU01067"/>
    </source>
</evidence>
<reference key="1">
    <citation type="submission" date="2005-08" db="EMBL/GenBank/DDBJ databases">
        <title>Complete sequence of chromosome 1 of Synechococcus elongatus PCC 7942.</title>
        <authorList>
            <consortium name="US DOE Joint Genome Institute"/>
            <person name="Copeland A."/>
            <person name="Lucas S."/>
            <person name="Lapidus A."/>
            <person name="Barry K."/>
            <person name="Detter J.C."/>
            <person name="Glavina T."/>
            <person name="Hammon N."/>
            <person name="Israni S."/>
            <person name="Pitluck S."/>
            <person name="Schmutz J."/>
            <person name="Larimer F."/>
            <person name="Land M."/>
            <person name="Kyrpides N."/>
            <person name="Lykidis A."/>
            <person name="Golden S."/>
            <person name="Richardson P."/>
        </authorList>
    </citation>
    <scope>NUCLEOTIDE SEQUENCE [LARGE SCALE GENOMIC DNA]</scope>
    <source>
        <strain>ATCC 33912 / PCC 7942 / FACHB-805</strain>
    </source>
</reference>
<accession>Q31KN6</accession>
<proteinExistence type="inferred from homology"/>
<name>LIPB_SYNE7</name>
<dbReference type="EC" id="2.3.1.181" evidence="1"/>
<dbReference type="EMBL" id="CP000100">
    <property type="protein sequence ID" value="ABB58383.1"/>
    <property type="molecule type" value="Genomic_DNA"/>
</dbReference>
<dbReference type="RefSeq" id="WP_011244060.1">
    <property type="nucleotide sequence ID" value="NZ_JACJTX010000001.1"/>
</dbReference>
<dbReference type="SMR" id="Q31KN6"/>
<dbReference type="STRING" id="1140.Synpcc7942_2353"/>
<dbReference type="PaxDb" id="1140-Synpcc7942_2353"/>
<dbReference type="GeneID" id="72431240"/>
<dbReference type="KEGG" id="syf:Synpcc7942_2353"/>
<dbReference type="eggNOG" id="COG0321">
    <property type="taxonomic scope" value="Bacteria"/>
</dbReference>
<dbReference type="HOGENOM" id="CLU_035168_1_0_3"/>
<dbReference type="OrthoDB" id="9787061at2"/>
<dbReference type="BioCyc" id="SYNEL:SYNPCC7942_2353-MONOMER"/>
<dbReference type="UniPathway" id="UPA00538">
    <property type="reaction ID" value="UER00592"/>
</dbReference>
<dbReference type="Proteomes" id="UP000889800">
    <property type="component" value="Chromosome"/>
</dbReference>
<dbReference type="GO" id="GO:0005737">
    <property type="term" value="C:cytoplasm"/>
    <property type="evidence" value="ECO:0007669"/>
    <property type="project" value="UniProtKB-SubCell"/>
</dbReference>
<dbReference type="GO" id="GO:0033819">
    <property type="term" value="F:lipoyl(octanoyl) transferase activity"/>
    <property type="evidence" value="ECO:0007669"/>
    <property type="project" value="UniProtKB-EC"/>
</dbReference>
<dbReference type="GO" id="GO:0036211">
    <property type="term" value="P:protein modification process"/>
    <property type="evidence" value="ECO:0007669"/>
    <property type="project" value="InterPro"/>
</dbReference>
<dbReference type="CDD" id="cd16444">
    <property type="entry name" value="LipB"/>
    <property type="match status" value="1"/>
</dbReference>
<dbReference type="Gene3D" id="3.30.930.10">
    <property type="entry name" value="Bira Bifunctional Protein, Domain 2"/>
    <property type="match status" value="1"/>
</dbReference>
<dbReference type="HAMAP" id="MF_00013">
    <property type="entry name" value="LipB"/>
    <property type="match status" value="1"/>
</dbReference>
<dbReference type="InterPro" id="IPR045864">
    <property type="entry name" value="aa-tRNA-synth_II/BPL/LPL"/>
</dbReference>
<dbReference type="InterPro" id="IPR004143">
    <property type="entry name" value="BPL_LPL_catalytic"/>
</dbReference>
<dbReference type="InterPro" id="IPR000544">
    <property type="entry name" value="Octanoyltransferase"/>
</dbReference>
<dbReference type="InterPro" id="IPR020605">
    <property type="entry name" value="Octanoyltransferase_CS"/>
</dbReference>
<dbReference type="NCBIfam" id="TIGR00214">
    <property type="entry name" value="lipB"/>
    <property type="match status" value="1"/>
</dbReference>
<dbReference type="NCBIfam" id="NF010925">
    <property type="entry name" value="PRK14345.1"/>
    <property type="match status" value="1"/>
</dbReference>
<dbReference type="PANTHER" id="PTHR10993:SF7">
    <property type="entry name" value="LIPOYLTRANSFERASE 2, MITOCHONDRIAL-RELATED"/>
    <property type="match status" value="1"/>
</dbReference>
<dbReference type="PANTHER" id="PTHR10993">
    <property type="entry name" value="OCTANOYLTRANSFERASE"/>
    <property type="match status" value="1"/>
</dbReference>
<dbReference type="Pfam" id="PF21948">
    <property type="entry name" value="LplA-B_cat"/>
    <property type="match status" value="1"/>
</dbReference>
<dbReference type="PIRSF" id="PIRSF016262">
    <property type="entry name" value="LPLase"/>
    <property type="match status" value="1"/>
</dbReference>
<dbReference type="SUPFAM" id="SSF55681">
    <property type="entry name" value="Class II aaRS and biotin synthetases"/>
    <property type="match status" value="1"/>
</dbReference>
<dbReference type="PROSITE" id="PS51733">
    <property type="entry name" value="BPL_LPL_CATALYTIC"/>
    <property type="match status" value="1"/>
</dbReference>
<dbReference type="PROSITE" id="PS01313">
    <property type="entry name" value="LIPB"/>
    <property type="match status" value="1"/>
</dbReference>
<keyword id="KW-0012">Acyltransferase</keyword>
<keyword id="KW-0963">Cytoplasm</keyword>
<keyword id="KW-1185">Reference proteome</keyword>
<keyword id="KW-0808">Transferase</keyword>
<feature type="chain" id="PRO_0000242775" description="Octanoyltransferase">
    <location>
        <begin position="1"/>
        <end position="233"/>
    </location>
</feature>
<feature type="domain" description="BPL/LPL catalytic" evidence="2">
    <location>
        <begin position="34"/>
        <end position="212"/>
    </location>
</feature>
<feature type="active site" description="Acyl-thioester intermediate" evidence="1">
    <location>
        <position position="174"/>
    </location>
</feature>
<feature type="binding site" evidence="1">
    <location>
        <begin position="76"/>
        <end position="83"/>
    </location>
    <ligand>
        <name>substrate</name>
    </ligand>
</feature>
<feature type="binding site" evidence="1">
    <location>
        <begin position="143"/>
        <end position="145"/>
    </location>
    <ligand>
        <name>substrate</name>
    </ligand>
</feature>
<feature type="binding site" evidence="1">
    <location>
        <begin position="156"/>
        <end position="158"/>
    </location>
    <ligand>
        <name>substrate</name>
    </ligand>
</feature>
<feature type="site" description="Lowers pKa of active site Cys" evidence="1">
    <location>
        <position position="140"/>
    </location>
</feature>
<sequence length="233" mass="25807">MSARAAWLVQAGCLDYAQVWAWQRQLQDNRRNNPDRPDVLLLLEHPAVYTLGRGSSLAHLKFDPQHPPAPVYRIERGGEVTHHAPGQLVGYPILNLRHHRCDLHWYLRQLEAVLILVLANYGLTGERIEGLTGVWVEGKKLAAIGIQVSRWISLHGFALNVCPDLAGFEAIVPCGISDRAVGSLVEFCPDVRLEVVRSQVAGAFAQTFELDLQPCSLEQLQAEENLTAIAGDP</sequence>
<organism>
    <name type="scientific">Synechococcus elongatus (strain ATCC 33912 / PCC 7942 / FACHB-805)</name>
    <name type="common">Anacystis nidulans R2</name>
    <dbReference type="NCBI Taxonomy" id="1140"/>
    <lineage>
        <taxon>Bacteria</taxon>
        <taxon>Bacillati</taxon>
        <taxon>Cyanobacteriota</taxon>
        <taxon>Cyanophyceae</taxon>
        <taxon>Synechococcales</taxon>
        <taxon>Synechococcaceae</taxon>
        <taxon>Synechococcus</taxon>
    </lineage>
</organism>